<dbReference type="EMBL" id="AY358305">
    <property type="protein sequence ID" value="AAQ88672.1"/>
    <property type="molecule type" value="mRNA"/>
</dbReference>
<dbReference type="EMBL" id="AK296832">
    <property type="protein sequence ID" value="BAG59402.1"/>
    <property type="molecule type" value="mRNA"/>
</dbReference>
<dbReference type="EMBL" id="AK316084">
    <property type="protein sequence ID" value="BAH14455.1"/>
    <property type="molecule type" value="mRNA"/>
</dbReference>
<dbReference type="EMBL" id="AC011597">
    <property type="status" value="NOT_ANNOTATED_CDS"/>
    <property type="molecule type" value="Genomic_DNA"/>
</dbReference>
<dbReference type="EMBL" id="CH471052">
    <property type="protein sequence ID" value="EAW79101.1"/>
    <property type="molecule type" value="Genomic_DNA"/>
</dbReference>
<dbReference type="EMBL" id="CH471052">
    <property type="protein sequence ID" value="EAW79104.1"/>
    <property type="molecule type" value="Genomic_DNA"/>
</dbReference>
<dbReference type="EMBL" id="BC033292">
    <property type="protein sequence ID" value="AAH33292.1"/>
    <property type="molecule type" value="mRNA"/>
</dbReference>
<dbReference type="EMBL" id="BC063696">
    <property type="protein sequence ID" value="AAH63696.2"/>
    <property type="molecule type" value="mRNA"/>
</dbReference>
<dbReference type="CCDS" id="CCDS3093.1">
    <molecule id="Q6UXL0-1"/>
</dbReference>
<dbReference type="RefSeq" id="NP_653318.2">
    <molecule id="Q6UXL0-1"/>
    <property type="nucleotide sequence ID" value="NM_144717.3"/>
</dbReference>
<dbReference type="PDB" id="4DOH">
    <property type="method" value="X-ray"/>
    <property type="resolution" value="2.80 A"/>
    <property type="chains" value="B/D=30-231"/>
</dbReference>
<dbReference type="PDB" id="6DF3">
    <property type="method" value="X-ray"/>
    <property type="resolution" value="2.15 A"/>
    <property type="chains" value="H=35-224"/>
</dbReference>
<dbReference type="PDBsum" id="4DOH"/>
<dbReference type="PDBsum" id="6DF3"/>
<dbReference type="SMR" id="Q6UXL0"/>
<dbReference type="BioGRID" id="119805">
    <property type="interactions" value="37"/>
</dbReference>
<dbReference type="ComplexPortal" id="CPX-10221">
    <property type="entry name" value="Interleukin-19 receptor-ligand complex"/>
</dbReference>
<dbReference type="ComplexPortal" id="CPX-10241">
    <property type="entry name" value="Interleukin-20 receptor-ligand Type 1 complex"/>
</dbReference>
<dbReference type="ComplexPortal" id="CPX-10261">
    <property type="entry name" value="Interleukin-20 receptor-ligand type 2 complex"/>
</dbReference>
<dbReference type="ComplexPortal" id="CPX-10310">
    <property type="entry name" value="Interleukin-24 receptor-ligand complex, type 1"/>
</dbReference>
<dbReference type="ComplexPortal" id="CPX-10311">
    <property type="entry name" value="Interleukin-24 receptor-ligand complex, type 2"/>
</dbReference>
<dbReference type="CORUM" id="Q6UXL0"/>
<dbReference type="FunCoup" id="Q6UXL0">
    <property type="interactions" value="852"/>
</dbReference>
<dbReference type="IntAct" id="Q6UXL0">
    <property type="interactions" value="31"/>
</dbReference>
<dbReference type="STRING" id="9606.ENSP00000328133"/>
<dbReference type="GlyCosmos" id="Q6UXL0">
    <property type="glycosylation" value="2 sites, No reported glycans"/>
</dbReference>
<dbReference type="GlyGen" id="Q6UXL0">
    <property type="glycosylation" value="2 sites, 1 N-linked glycan (1 site)"/>
</dbReference>
<dbReference type="iPTMnet" id="Q6UXL0"/>
<dbReference type="PhosphoSitePlus" id="Q6UXL0"/>
<dbReference type="BioMuta" id="IL20RB"/>
<dbReference type="DMDM" id="51701521"/>
<dbReference type="MassIVE" id="Q6UXL0"/>
<dbReference type="PaxDb" id="9606-ENSP00000328133"/>
<dbReference type="PeptideAtlas" id="Q6UXL0"/>
<dbReference type="Antibodypedia" id="17858">
    <property type="antibodies" value="266 antibodies from 27 providers"/>
</dbReference>
<dbReference type="DNASU" id="53833"/>
<dbReference type="Ensembl" id="ENST00000329582.9">
    <molecule id="Q6UXL0-1"/>
    <property type="protein sequence ID" value="ENSP00000328133.4"/>
    <property type="gene ID" value="ENSG00000174564.13"/>
</dbReference>
<dbReference type="GeneID" id="53833"/>
<dbReference type="KEGG" id="hsa:53833"/>
<dbReference type="MANE-Select" id="ENST00000329582.9">
    <property type="protein sequence ID" value="ENSP00000328133.4"/>
    <property type="RefSeq nucleotide sequence ID" value="NM_144717.4"/>
    <property type="RefSeq protein sequence ID" value="NP_653318.2"/>
</dbReference>
<dbReference type="UCSC" id="uc003eri.3">
    <molecule id="Q6UXL0-1"/>
    <property type="organism name" value="human"/>
</dbReference>
<dbReference type="AGR" id="HGNC:6004"/>
<dbReference type="CTD" id="53833"/>
<dbReference type="DisGeNET" id="53833"/>
<dbReference type="GeneCards" id="IL20RB"/>
<dbReference type="HGNC" id="HGNC:6004">
    <property type="gene designation" value="IL20RB"/>
</dbReference>
<dbReference type="HPA" id="ENSG00000174564">
    <property type="expression patterns" value="Group enriched (esophagus, skin, vagina)"/>
</dbReference>
<dbReference type="MIM" id="605621">
    <property type="type" value="gene"/>
</dbReference>
<dbReference type="neXtProt" id="NX_Q6UXL0"/>
<dbReference type="OpenTargets" id="ENSG00000174564"/>
<dbReference type="PharmGKB" id="PA29819"/>
<dbReference type="VEuPathDB" id="HostDB:ENSG00000174564"/>
<dbReference type="eggNOG" id="ENOG502S2V6">
    <property type="taxonomic scope" value="Eukaryota"/>
</dbReference>
<dbReference type="GeneTree" id="ENSGT00510000048354"/>
<dbReference type="HOGENOM" id="CLU_074126_1_0_1"/>
<dbReference type="InParanoid" id="Q6UXL0"/>
<dbReference type="OMA" id="QGEYERY"/>
<dbReference type="OrthoDB" id="8704831at2759"/>
<dbReference type="PAN-GO" id="Q6UXL0">
    <property type="GO annotations" value="4 GO annotations based on evolutionary models"/>
</dbReference>
<dbReference type="PhylomeDB" id="Q6UXL0"/>
<dbReference type="TreeFam" id="TF332537"/>
<dbReference type="PathwayCommons" id="Q6UXL0"/>
<dbReference type="Reactome" id="R-HSA-8854691">
    <property type="pathway name" value="Interleukin-20 family signaling"/>
</dbReference>
<dbReference type="SignaLink" id="Q6UXL0"/>
<dbReference type="SIGNOR" id="Q6UXL0"/>
<dbReference type="BioGRID-ORCS" id="53833">
    <property type="hits" value="7 hits in 1157 CRISPR screens"/>
</dbReference>
<dbReference type="EvolutionaryTrace" id="Q6UXL0"/>
<dbReference type="GeneWiki" id="Interleukin_20_receptor,_beta_subunit"/>
<dbReference type="GenomeRNAi" id="53833"/>
<dbReference type="Pharos" id="Q6UXL0">
    <property type="development level" value="Tbio"/>
</dbReference>
<dbReference type="PRO" id="PR:Q6UXL0"/>
<dbReference type="Proteomes" id="UP000005640">
    <property type="component" value="Chromosome 3"/>
</dbReference>
<dbReference type="RNAct" id="Q6UXL0">
    <property type="molecule type" value="protein"/>
</dbReference>
<dbReference type="Bgee" id="ENSG00000174564">
    <property type="expression patterns" value="Expressed in upper arm skin and 112 other cell types or tissues"/>
</dbReference>
<dbReference type="ExpressionAtlas" id="Q6UXL0">
    <property type="expression patterns" value="baseline and differential"/>
</dbReference>
<dbReference type="GO" id="GO:0005886">
    <property type="term" value="C:plasma membrane"/>
    <property type="evidence" value="ECO:0000318"/>
    <property type="project" value="GO_Central"/>
</dbReference>
<dbReference type="GO" id="GO:0004896">
    <property type="term" value="F:cytokine receptor activity"/>
    <property type="evidence" value="ECO:0000318"/>
    <property type="project" value="GO_Central"/>
</dbReference>
<dbReference type="GO" id="GO:0042015">
    <property type="term" value="F:interleukin-20 binding"/>
    <property type="evidence" value="ECO:0000318"/>
    <property type="project" value="GO_Central"/>
</dbReference>
<dbReference type="GO" id="GO:0160165">
    <property type="term" value="P:CD8-positive, alpha-beta T cell homeostasis"/>
    <property type="evidence" value="ECO:0007669"/>
    <property type="project" value="Ensembl"/>
</dbReference>
<dbReference type="GO" id="GO:0019221">
    <property type="term" value="P:cytokine-mediated signaling pathway"/>
    <property type="evidence" value="ECO:0000318"/>
    <property type="project" value="GO_Central"/>
</dbReference>
<dbReference type="GO" id="GO:0048873">
    <property type="term" value="P:homeostasis of number of cells within a tissue"/>
    <property type="evidence" value="ECO:0007669"/>
    <property type="project" value="Ensembl"/>
</dbReference>
<dbReference type="GO" id="GO:0002765">
    <property type="term" value="P:immune response-inhibiting signal transduction"/>
    <property type="evidence" value="ECO:0007669"/>
    <property type="project" value="Ensembl"/>
</dbReference>
<dbReference type="GO" id="GO:0002437">
    <property type="term" value="P:inflammatory response to antigenic stimulus"/>
    <property type="evidence" value="ECO:0007669"/>
    <property type="project" value="Ensembl"/>
</dbReference>
<dbReference type="GO" id="GO:0032703">
    <property type="term" value="P:negative regulation of interleukin-2 production"/>
    <property type="evidence" value="ECO:0007669"/>
    <property type="project" value="Ensembl"/>
</dbReference>
<dbReference type="GO" id="GO:0042130">
    <property type="term" value="P:negative regulation of T cell proliferation"/>
    <property type="evidence" value="ECO:0007669"/>
    <property type="project" value="Ensembl"/>
</dbReference>
<dbReference type="GO" id="GO:0032689">
    <property type="term" value="P:negative regulation of type II interferon production"/>
    <property type="evidence" value="ECO:0007669"/>
    <property type="project" value="Ensembl"/>
</dbReference>
<dbReference type="GO" id="GO:0001808">
    <property type="term" value="P:negative regulation of type IV hypersensitivity"/>
    <property type="evidence" value="ECO:0007669"/>
    <property type="project" value="Ensembl"/>
</dbReference>
<dbReference type="GO" id="GO:0032733">
    <property type="term" value="P:positive regulation of interleukin-10 production"/>
    <property type="evidence" value="ECO:0007669"/>
    <property type="project" value="Ensembl"/>
</dbReference>
<dbReference type="GO" id="GO:0032753">
    <property type="term" value="P:positive regulation of interleukin-4 production"/>
    <property type="evidence" value="ECO:0007669"/>
    <property type="project" value="Ensembl"/>
</dbReference>
<dbReference type="GO" id="GO:0042098">
    <property type="term" value="P:T cell proliferation"/>
    <property type="evidence" value="ECO:0007669"/>
    <property type="project" value="Ensembl"/>
</dbReference>
<dbReference type="CDD" id="cd00063">
    <property type="entry name" value="FN3"/>
    <property type="match status" value="1"/>
</dbReference>
<dbReference type="FunFam" id="2.60.40.10:FF:001006">
    <property type="entry name" value="Interleukin 20 receptor subunit beta"/>
    <property type="match status" value="1"/>
</dbReference>
<dbReference type="FunFam" id="2.60.40.10:FF:001093">
    <property type="entry name" value="Interleukin 20 receptor subunit beta"/>
    <property type="match status" value="1"/>
</dbReference>
<dbReference type="Gene3D" id="2.60.40.10">
    <property type="entry name" value="Immunoglobulins"/>
    <property type="match status" value="2"/>
</dbReference>
<dbReference type="InterPro" id="IPR003961">
    <property type="entry name" value="FN3_dom"/>
</dbReference>
<dbReference type="InterPro" id="IPR036116">
    <property type="entry name" value="FN3_sf"/>
</dbReference>
<dbReference type="InterPro" id="IPR013783">
    <property type="entry name" value="Ig-like_fold"/>
</dbReference>
<dbReference type="InterPro" id="IPR015373">
    <property type="entry name" value="Interferon/interleukin_rcp_dom"/>
</dbReference>
<dbReference type="InterPro" id="IPR050650">
    <property type="entry name" value="Type-II_Cytokine-TF_Rcpt"/>
</dbReference>
<dbReference type="PANTHER" id="PTHR20859">
    <property type="entry name" value="INTERFERON/INTERLEUKIN RECEPTOR"/>
    <property type="match status" value="1"/>
</dbReference>
<dbReference type="PANTHER" id="PTHR20859:SF48">
    <property type="entry name" value="INTERLEUKIN-20 RECEPTOR SUBUNIT BETA"/>
    <property type="match status" value="1"/>
</dbReference>
<dbReference type="Pfam" id="PF09294">
    <property type="entry name" value="Interfer-bind"/>
    <property type="match status" value="1"/>
</dbReference>
<dbReference type="Pfam" id="PF01108">
    <property type="entry name" value="Tissue_fac"/>
    <property type="match status" value="1"/>
</dbReference>
<dbReference type="SUPFAM" id="SSF49265">
    <property type="entry name" value="Fibronectin type III"/>
    <property type="match status" value="2"/>
</dbReference>
<dbReference type="PROSITE" id="PS50853">
    <property type="entry name" value="FN3"/>
    <property type="match status" value="1"/>
</dbReference>
<proteinExistence type="evidence at protein level"/>
<keyword id="KW-0002">3D-structure</keyword>
<keyword id="KW-0025">Alternative splicing</keyword>
<keyword id="KW-0903">Direct protein sequencing</keyword>
<keyword id="KW-1015">Disulfide bond</keyword>
<keyword id="KW-0325">Glycoprotein</keyword>
<keyword id="KW-0472">Membrane</keyword>
<keyword id="KW-1267">Proteomics identification</keyword>
<keyword id="KW-0675">Receptor</keyword>
<keyword id="KW-1185">Reference proteome</keyword>
<keyword id="KW-0677">Repeat</keyword>
<keyword id="KW-0732">Signal</keyword>
<keyword id="KW-0812">Transmembrane</keyword>
<keyword id="KW-1133">Transmembrane helix</keyword>
<reference key="1">
    <citation type="journal article" date="2003" name="Genome Res.">
        <title>The secreted protein discovery initiative (SPDI), a large-scale effort to identify novel human secreted and transmembrane proteins: a bioinformatics assessment.</title>
        <authorList>
            <person name="Clark H.F."/>
            <person name="Gurney A.L."/>
            <person name="Abaya E."/>
            <person name="Baker K."/>
            <person name="Baldwin D.T."/>
            <person name="Brush J."/>
            <person name="Chen J."/>
            <person name="Chow B."/>
            <person name="Chui C."/>
            <person name="Crowley C."/>
            <person name="Currell B."/>
            <person name="Deuel B."/>
            <person name="Dowd P."/>
            <person name="Eaton D."/>
            <person name="Foster J.S."/>
            <person name="Grimaldi C."/>
            <person name="Gu Q."/>
            <person name="Hass P.E."/>
            <person name="Heldens S."/>
            <person name="Huang A."/>
            <person name="Kim H.S."/>
            <person name="Klimowski L."/>
            <person name="Jin Y."/>
            <person name="Johnson S."/>
            <person name="Lee J."/>
            <person name="Lewis L."/>
            <person name="Liao D."/>
            <person name="Mark M.R."/>
            <person name="Robbie E."/>
            <person name="Sanchez C."/>
            <person name="Schoenfeld J."/>
            <person name="Seshagiri S."/>
            <person name="Simmons L."/>
            <person name="Singh J."/>
            <person name="Smith V."/>
            <person name="Stinson J."/>
            <person name="Vagts A."/>
            <person name="Vandlen R.L."/>
            <person name="Watanabe C."/>
            <person name="Wieand D."/>
            <person name="Woods K."/>
            <person name="Xie M.-H."/>
            <person name="Yansura D.G."/>
            <person name="Yi S."/>
            <person name="Yu G."/>
            <person name="Yuan J."/>
            <person name="Zhang M."/>
            <person name="Zhang Z."/>
            <person name="Goddard A.D."/>
            <person name="Wood W.I."/>
            <person name="Godowski P.J."/>
            <person name="Gray A.M."/>
        </authorList>
    </citation>
    <scope>NUCLEOTIDE SEQUENCE [LARGE SCALE MRNA] (ISOFORM 1)</scope>
</reference>
<reference key="2">
    <citation type="journal article" date="2004" name="Nat. Genet.">
        <title>Complete sequencing and characterization of 21,243 full-length human cDNAs.</title>
        <authorList>
            <person name="Ota T."/>
            <person name="Suzuki Y."/>
            <person name="Nishikawa T."/>
            <person name="Otsuki T."/>
            <person name="Sugiyama T."/>
            <person name="Irie R."/>
            <person name="Wakamatsu A."/>
            <person name="Hayashi K."/>
            <person name="Sato H."/>
            <person name="Nagai K."/>
            <person name="Kimura K."/>
            <person name="Makita H."/>
            <person name="Sekine M."/>
            <person name="Obayashi M."/>
            <person name="Nishi T."/>
            <person name="Shibahara T."/>
            <person name="Tanaka T."/>
            <person name="Ishii S."/>
            <person name="Yamamoto J."/>
            <person name="Saito K."/>
            <person name="Kawai Y."/>
            <person name="Isono Y."/>
            <person name="Nakamura Y."/>
            <person name="Nagahari K."/>
            <person name="Murakami K."/>
            <person name="Yasuda T."/>
            <person name="Iwayanagi T."/>
            <person name="Wagatsuma M."/>
            <person name="Shiratori A."/>
            <person name="Sudo H."/>
            <person name="Hosoiri T."/>
            <person name="Kaku Y."/>
            <person name="Kodaira H."/>
            <person name="Kondo H."/>
            <person name="Sugawara M."/>
            <person name="Takahashi M."/>
            <person name="Kanda K."/>
            <person name="Yokoi T."/>
            <person name="Furuya T."/>
            <person name="Kikkawa E."/>
            <person name="Omura Y."/>
            <person name="Abe K."/>
            <person name="Kamihara K."/>
            <person name="Katsuta N."/>
            <person name="Sato K."/>
            <person name="Tanikawa M."/>
            <person name="Yamazaki M."/>
            <person name="Ninomiya K."/>
            <person name="Ishibashi T."/>
            <person name="Yamashita H."/>
            <person name="Murakawa K."/>
            <person name="Fujimori K."/>
            <person name="Tanai H."/>
            <person name="Kimata M."/>
            <person name="Watanabe M."/>
            <person name="Hiraoka S."/>
            <person name="Chiba Y."/>
            <person name="Ishida S."/>
            <person name="Ono Y."/>
            <person name="Takiguchi S."/>
            <person name="Watanabe S."/>
            <person name="Yosida M."/>
            <person name="Hotuta T."/>
            <person name="Kusano J."/>
            <person name="Kanehori K."/>
            <person name="Takahashi-Fujii A."/>
            <person name="Hara H."/>
            <person name="Tanase T.-O."/>
            <person name="Nomura Y."/>
            <person name="Togiya S."/>
            <person name="Komai F."/>
            <person name="Hara R."/>
            <person name="Takeuchi K."/>
            <person name="Arita M."/>
            <person name="Imose N."/>
            <person name="Musashino K."/>
            <person name="Yuuki H."/>
            <person name="Oshima A."/>
            <person name="Sasaki N."/>
            <person name="Aotsuka S."/>
            <person name="Yoshikawa Y."/>
            <person name="Matsunawa H."/>
            <person name="Ichihara T."/>
            <person name="Shiohata N."/>
            <person name="Sano S."/>
            <person name="Moriya S."/>
            <person name="Momiyama H."/>
            <person name="Satoh N."/>
            <person name="Takami S."/>
            <person name="Terashima Y."/>
            <person name="Suzuki O."/>
            <person name="Nakagawa S."/>
            <person name="Senoh A."/>
            <person name="Mizoguchi H."/>
            <person name="Goto Y."/>
            <person name="Shimizu F."/>
            <person name="Wakebe H."/>
            <person name="Hishigaki H."/>
            <person name="Watanabe T."/>
            <person name="Sugiyama A."/>
            <person name="Takemoto M."/>
            <person name="Kawakami B."/>
            <person name="Yamazaki M."/>
            <person name="Watanabe K."/>
            <person name="Kumagai A."/>
            <person name="Itakura S."/>
            <person name="Fukuzumi Y."/>
            <person name="Fujimori Y."/>
            <person name="Komiyama M."/>
            <person name="Tashiro H."/>
            <person name="Tanigami A."/>
            <person name="Fujiwara T."/>
            <person name="Ono T."/>
            <person name="Yamada K."/>
            <person name="Fujii Y."/>
            <person name="Ozaki K."/>
            <person name="Hirao M."/>
            <person name="Ohmori Y."/>
            <person name="Kawabata A."/>
            <person name="Hikiji T."/>
            <person name="Kobatake N."/>
            <person name="Inagaki H."/>
            <person name="Ikema Y."/>
            <person name="Okamoto S."/>
            <person name="Okitani R."/>
            <person name="Kawakami T."/>
            <person name="Noguchi S."/>
            <person name="Itoh T."/>
            <person name="Shigeta K."/>
            <person name="Senba T."/>
            <person name="Matsumura K."/>
            <person name="Nakajima Y."/>
            <person name="Mizuno T."/>
            <person name="Morinaga M."/>
            <person name="Sasaki M."/>
            <person name="Togashi T."/>
            <person name="Oyama M."/>
            <person name="Hata H."/>
            <person name="Watanabe M."/>
            <person name="Komatsu T."/>
            <person name="Mizushima-Sugano J."/>
            <person name="Satoh T."/>
            <person name="Shirai Y."/>
            <person name="Takahashi Y."/>
            <person name="Nakagawa K."/>
            <person name="Okumura K."/>
            <person name="Nagase T."/>
            <person name="Nomura N."/>
            <person name="Kikuchi H."/>
            <person name="Masuho Y."/>
            <person name="Yamashita R."/>
            <person name="Nakai K."/>
            <person name="Yada T."/>
            <person name="Nakamura Y."/>
            <person name="Ohara O."/>
            <person name="Isogai T."/>
            <person name="Sugano S."/>
        </authorList>
    </citation>
    <scope>NUCLEOTIDE SEQUENCE [LARGE SCALE MRNA] (ISOFORM 1)</scope>
    <source>
        <tissue>Thalamus</tissue>
        <tissue>Tongue</tissue>
    </source>
</reference>
<reference key="3">
    <citation type="journal article" date="2006" name="Nature">
        <title>The DNA sequence, annotation and analysis of human chromosome 3.</title>
        <authorList>
            <person name="Muzny D.M."/>
            <person name="Scherer S.E."/>
            <person name="Kaul R."/>
            <person name="Wang J."/>
            <person name="Yu J."/>
            <person name="Sudbrak R."/>
            <person name="Buhay C.J."/>
            <person name="Chen R."/>
            <person name="Cree A."/>
            <person name="Ding Y."/>
            <person name="Dugan-Rocha S."/>
            <person name="Gill R."/>
            <person name="Gunaratne P."/>
            <person name="Harris R.A."/>
            <person name="Hawes A.C."/>
            <person name="Hernandez J."/>
            <person name="Hodgson A.V."/>
            <person name="Hume J."/>
            <person name="Jackson A."/>
            <person name="Khan Z.M."/>
            <person name="Kovar-Smith C."/>
            <person name="Lewis L.R."/>
            <person name="Lozado R.J."/>
            <person name="Metzker M.L."/>
            <person name="Milosavljevic A."/>
            <person name="Miner G.R."/>
            <person name="Morgan M.B."/>
            <person name="Nazareth L.V."/>
            <person name="Scott G."/>
            <person name="Sodergren E."/>
            <person name="Song X.-Z."/>
            <person name="Steffen D."/>
            <person name="Wei S."/>
            <person name="Wheeler D.A."/>
            <person name="Wright M.W."/>
            <person name="Worley K.C."/>
            <person name="Yuan Y."/>
            <person name="Zhang Z."/>
            <person name="Adams C.Q."/>
            <person name="Ansari-Lari M.A."/>
            <person name="Ayele M."/>
            <person name="Brown M.J."/>
            <person name="Chen G."/>
            <person name="Chen Z."/>
            <person name="Clendenning J."/>
            <person name="Clerc-Blankenburg K.P."/>
            <person name="Chen R."/>
            <person name="Chen Z."/>
            <person name="Davis C."/>
            <person name="Delgado O."/>
            <person name="Dinh H.H."/>
            <person name="Dong W."/>
            <person name="Draper H."/>
            <person name="Ernst S."/>
            <person name="Fu G."/>
            <person name="Gonzalez-Garay M.L."/>
            <person name="Garcia D.K."/>
            <person name="Gillett W."/>
            <person name="Gu J."/>
            <person name="Hao B."/>
            <person name="Haugen E."/>
            <person name="Havlak P."/>
            <person name="He X."/>
            <person name="Hennig S."/>
            <person name="Hu S."/>
            <person name="Huang W."/>
            <person name="Jackson L.R."/>
            <person name="Jacob L.S."/>
            <person name="Kelly S.H."/>
            <person name="Kube M."/>
            <person name="Levy R."/>
            <person name="Li Z."/>
            <person name="Liu B."/>
            <person name="Liu J."/>
            <person name="Liu W."/>
            <person name="Lu J."/>
            <person name="Maheshwari M."/>
            <person name="Nguyen B.-V."/>
            <person name="Okwuonu G.O."/>
            <person name="Palmeiri A."/>
            <person name="Pasternak S."/>
            <person name="Perez L.M."/>
            <person name="Phelps K.A."/>
            <person name="Plopper F.J."/>
            <person name="Qiang B."/>
            <person name="Raymond C."/>
            <person name="Rodriguez R."/>
            <person name="Saenphimmachak C."/>
            <person name="Santibanez J."/>
            <person name="Shen H."/>
            <person name="Shen Y."/>
            <person name="Subramanian S."/>
            <person name="Tabor P.E."/>
            <person name="Verduzco D."/>
            <person name="Waldron L."/>
            <person name="Wang J."/>
            <person name="Wang J."/>
            <person name="Wang Q."/>
            <person name="Williams G.A."/>
            <person name="Wong G.K.-S."/>
            <person name="Yao Z."/>
            <person name="Zhang J."/>
            <person name="Zhang X."/>
            <person name="Zhao G."/>
            <person name="Zhou J."/>
            <person name="Zhou Y."/>
            <person name="Nelson D."/>
            <person name="Lehrach H."/>
            <person name="Reinhardt R."/>
            <person name="Naylor S.L."/>
            <person name="Yang H."/>
            <person name="Olson M."/>
            <person name="Weinstock G."/>
            <person name="Gibbs R.A."/>
        </authorList>
    </citation>
    <scope>NUCLEOTIDE SEQUENCE [LARGE SCALE GENOMIC DNA]</scope>
</reference>
<reference key="4">
    <citation type="submission" date="2005-09" db="EMBL/GenBank/DDBJ databases">
        <authorList>
            <person name="Mural R.J."/>
            <person name="Istrail S."/>
            <person name="Sutton G."/>
            <person name="Florea L."/>
            <person name="Halpern A.L."/>
            <person name="Mobarry C.M."/>
            <person name="Lippert R."/>
            <person name="Walenz B."/>
            <person name="Shatkay H."/>
            <person name="Dew I."/>
            <person name="Miller J.R."/>
            <person name="Flanigan M.J."/>
            <person name="Edwards N.J."/>
            <person name="Bolanos R."/>
            <person name="Fasulo D."/>
            <person name="Halldorsson B.V."/>
            <person name="Hannenhalli S."/>
            <person name="Turner R."/>
            <person name="Yooseph S."/>
            <person name="Lu F."/>
            <person name="Nusskern D.R."/>
            <person name="Shue B.C."/>
            <person name="Zheng X.H."/>
            <person name="Zhong F."/>
            <person name="Delcher A.L."/>
            <person name="Huson D.H."/>
            <person name="Kravitz S.A."/>
            <person name="Mouchard L."/>
            <person name="Reinert K."/>
            <person name="Remington K.A."/>
            <person name="Clark A.G."/>
            <person name="Waterman M.S."/>
            <person name="Eichler E.E."/>
            <person name="Adams M.D."/>
            <person name="Hunkapiller M.W."/>
            <person name="Myers E.W."/>
            <person name="Venter J.C."/>
        </authorList>
    </citation>
    <scope>NUCLEOTIDE SEQUENCE [LARGE SCALE GENOMIC DNA]</scope>
</reference>
<reference key="5">
    <citation type="journal article" date="2004" name="Genome Res.">
        <title>The status, quality, and expansion of the NIH full-length cDNA project: the Mammalian Gene Collection (MGC).</title>
        <authorList>
            <consortium name="The MGC Project Team"/>
        </authorList>
    </citation>
    <scope>NUCLEOTIDE SEQUENCE [LARGE SCALE MRNA] (ISOFORMS 1 AND 2)</scope>
    <source>
        <tissue>Skin</tissue>
    </source>
</reference>
<reference key="6">
    <citation type="journal article" date="2004" name="Protein Sci.">
        <title>Signal peptide prediction based on analysis of experimentally verified cleavage sites.</title>
        <authorList>
            <person name="Zhang Z."/>
            <person name="Henzel W.J."/>
        </authorList>
    </citation>
    <scope>PROTEIN SEQUENCE OF 30-44</scope>
</reference>
<reference key="7">
    <citation type="journal article" date="2001" name="Cell">
        <title>Interleukin 20: discovery, receptor identification, and role in epidermal function.</title>
        <authorList>
            <person name="Blumberg H."/>
            <person name="Conklin D."/>
            <person name="Xu W.F."/>
            <person name="Grossmann A."/>
            <person name="Brender T."/>
            <person name="Carollo S."/>
            <person name="Eagan M."/>
            <person name="Foster D."/>
            <person name="Haldeman B.A."/>
            <person name="Hammond A."/>
            <person name="Haugen H."/>
            <person name="Jelinek L."/>
            <person name="Kelly J.D."/>
            <person name="Madden K."/>
            <person name="Maurer M.F."/>
            <person name="Parrish-Novak J."/>
            <person name="Prunkard D."/>
            <person name="Sexson S."/>
            <person name="Sprecher C."/>
            <person name="Waggie K."/>
            <person name="West J."/>
            <person name="Whitmore T.E."/>
            <person name="Yao L."/>
            <person name="Kuechle M.K."/>
            <person name="Dale B.A."/>
            <person name="Chandrasekher Y.A."/>
        </authorList>
    </citation>
    <scope>SUBUNIT</scope>
    <scope>LIGAND-BINDING</scope>
    <scope>TISSUE SPECIFICITY</scope>
</reference>
<reference key="8">
    <citation type="journal article" date="2001" name="J. Immunol.">
        <title>STAT activation by IL-19, IL-20 and mda-7 through IL-20 receptor complexes of two types.</title>
        <authorList>
            <person name="Dumoutier L."/>
            <person name="Leemans C."/>
            <person name="Lejeune D."/>
            <person name="Kotenko S.V."/>
            <person name="Renauld J.-C."/>
        </authorList>
    </citation>
    <scope>SUBUNIT</scope>
    <scope>LIGAND-BINDING</scope>
</reference>
<reference key="9">
    <citation type="journal article" date="2002" name="J. Biol. Chem.">
        <title>Interleukins 19, 20, and 24 signal through two distinct receptor complexes. Differences in receptor-ligand interactions mediate unique biological functions.</title>
        <authorList>
            <person name="Parrish-Novak J."/>
            <person name="Xu W."/>
            <person name="Brender T."/>
            <person name="Yao L."/>
            <person name="Jones C."/>
            <person name="West J."/>
            <person name="Brandt C."/>
            <person name="Jelinek L."/>
            <person name="Madden K."/>
            <person name="McKernan P.A."/>
            <person name="Foster D.C."/>
            <person name="Jaspers S."/>
            <person name="Chandrasekher Y.A."/>
        </authorList>
    </citation>
    <scope>SUBUNIT</scope>
    <scope>LIGAND-BINDING</scope>
</reference>
<reference key="10">
    <citation type="journal article" date="2003" name="Biochemistry">
        <title>Characterization of the recombinant extracellular domains of human interleukin-20 receptors and their complexes with interleukin-19 and interleukin-20.</title>
        <authorList>
            <person name="Pletnev S."/>
            <person name="Magracheva E."/>
            <person name="Kozlov S."/>
            <person name="Tobin G."/>
            <person name="Kotenko S.V."/>
            <person name="Wlodawer A."/>
            <person name="Zdanov A."/>
        </authorList>
    </citation>
    <scope>SUBUNIT</scope>
    <scope>LIGAND-BINDING</scope>
</reference>
<reference key="11">
    <citation type="journal article" date="2012" name="Proc. Natl. Acad. Sci. U.S.A.">
        <title>Structural basis for receptor sharing and activation by interleukin-20 receptor-2 (IL-20R2) binding cytokines.</title>
        <authorList>
            <person name="Logsdon N.J."/>
            <person name="Deshpande A."/>
            <person name="Harris B.D."/>
            <person name="Rajashankar K.R."/>
            <person name="Walter M.R."/>
        </authorList>
    </citation>
    <scope>X-RAY CRYSTALLOGRAPHY (2.8 ANGSTROMS) OF 30-231 IN COMPLEX WITH IL20RA AND IL20</scope>
    <scope>SUBUNIT</scope>
    <scope>DISULFIDE BONDS</scope>
</reference>
<protein>
    <recommendedName>
        <fullName>Interleukin-20 receptor subunit beta</fullName>
        <shortName>IL-20 receptor subunit beta</shortName>
        <shortName>IL-20R-beta</shortName>
        <shortName>IL-20RB</shortName>
    </recommendedName>
    <alternativeName>
        <fullName>Fibronectin type III domain containing 6</fullName>
        <shortName>FNDC6</shortName>
    </alternativeName>
    <alternativeName>
        <fullName>IL-20R2</fullName>
    </alternativeName>
</protein>
<gene>
    <name type="primary">IL20RB</name>
    <name type="synonym">DIRS1</name>
    <name type="ORF">UNQ557/PRO1114</name>
</gene>
<evidence type="ECO:0000250" key="1"/>
<evidence type="ECO:0000255" key="2"/>
<evidence type="ECO:0000255" key="3">
    <source>
        <dbReference type="PROSITE-ProRule" id="PRU00316"/>
    </source>
</evidence>
<evidence type="ECO:0000269" key="4">
    <source>
    </source>
</evidence>
<evidence type="ECO:0000269" key="5">
    <source>
    </source>
</evidence>
<evidence type="ECO:0000269" key="6">
    <source>
    </source>
</evidence>
<evidence type="ECO:0000269" key="7">
    <source>
    </source>
</evidence>
<evidence type="ECO:0000269" key="8">
    <source>
    </source>
</evidence>
<evidence type="ECO:0000269" key="9">
    <source>
    </source>
</evidence>
<evidence type="ECO:0000303" key="10">
    <source>
    </source>
</evidence>
<evidence type="ECO:0000305" key="11"/>
<evidence type="ECO:0007829" key="12">
    <source>
        <dbReference type="PDB" id="4DOH"/>
    </source>
</evidence>
<evidence type="ECO:0007829" key="13">
    <source>
        <dbReference type="PDB" id="6DF3"/>
    </source>
</evidence>
<sequence>MQTFTMVLEEIWTSLFMWFFYALIPCLLTDEVAILPAPQNLSVLSTNMKHLLMWSPVIAPGETVYYSVEYQGEYESLYTSHIWIPSSWCSLTEGPECDVTDDITATVPYNLRVRATLGSQTSAWSILKHPFNRNSTILTRPGMEITKDGFHLVIELEDLGPQFEFLVAYWRREPGAEEHVKMVRSGGIPVHLETMEPGAAYCVKAQTFVKAIGRYSAFSQTECVEVQGEAIPLVLALFAFVGFMLILVVVPLFVWKMGRLLQYSCCPVVVLPDTLKITNSPQKLISCRREEVDACATAVMSPEELLRAWIS</sequence>
<name>I20RB_HUMAN</name>
<accession>Q6UXL0</accession>
<accession>B4DL40</accession>
<accession>Q6P438</accession>
<accession>Q8IYY5</accession>
<accession>Q8TAJ7</accession>
<comment type="function">
    <text>The IL20RA/IL20RB dimer is a receptor for IL19, IL20 and IL24. The IL22RA1/IL20RB dimer is a receptor for IL20 and IL24.</text>
</comment>
<comment type="subunit">
    <text evidence="4 5 6 7 9">Heterodimer with IL20RA and heterodimer with IL22RA1.</text>
</comment>
<comment type="interaction">
    <interactant intactId="EBI-14022792">
        <id>Q6UXL0</id>
    </interactant>
    <interactant intactId="EBI-14023330">
        <id>PRO_0000015379</id>
        <label>IL19</label>
        <dbReference type="UniProtKB" id="Q9UHD0"/>
    </interactant>
    <organismsDiffer>false</organismsDiffer>
    <experiments>4</experiments>
</comment>
<comment type="interaction">
    <interactant intactId="EBI-14022792">
        <id>Q6UXL0</id>
    </interactant>
    <interactant intactId="EBI-14022785">
        <id>PRO_0000015381</id>
        <label>IL20</label>
        <dbReference type="UniProtKB" id="Q9NYY1"/>
    </interactant>
    <organismsDiffer>false</organismsDiffer>
    <experiments>5</experiments>
</comment>
<comment type="interaction">
    <interactant intactId="EBI-14022792">
        <id>Q6UXL0</id>
    </interactant>
    <interactant intactId="EBI-3932027">
        <id>P21145</id>
        <label>MAL</label>
    </interactant>
    <organismsDiffer>false</organismsDiffer>
    <experiments>3</experiments>
</comment>
<comment type="subcellular location">
    <subcellularLocation>
        <location evidence="1">Membrane</location>
        <topology evidence="1">Single-pass type I membrane protein</topology>
    </subcellularLocation>
</comment>
<comment type="alternative products">
    <event type="alternative splicing"/>
    <isoform>
        <id>Q6UXL0-1</id>
        <name>1</name>
        <sequence type="displayed"/>
    </isoform>
    <isoform>
        <id>Q6UXL0-3</id>
        <name>2</name>
        <sequence type="described" ref="VSP_054905 VSP_054906 VSP_054907"/>
    </isoform>
</comment>
<comment type="tissue specificity">
    <text evidence="4">Widely expressed with highest levels in skin and testis. Highly expressed in psoriatic skin.</text>
</comment>
<comment type="similarity">
    <text evidence="11">Belongs to the type II cytokine receptor family.</text>
</comment>
<feature type="signal peptide" evidence="8">
    <location>
        <begin position="1"/>
        <end position="29"/>
    </location>
</feature>
<feature type="chain" id="PRO_0000011038" description="Interleukin-20 receptor subunit beta">
    <location>
        <begin position="30"/>
        <end position="311"/>
    </location>
</feature>
<feature type="topological domain" description="Extracellular" evidence="2">
    <location>
        <begin position="30"/>
        <end position="233"/>
    </location>
</feature>
<feature type="transmembrane region" description="Helical" evidence="2">
    <location>
        <begin position="234"/>
        <end position="254"/>
    </location>
</feature>
<feature type="topological domain" description="Cytoplasmic" evidence="2">
    <location>
        <begin position="255"/>
        <end position="311"/>
    </location>
</feature>
<feature type="domain" description="Fibronectin type-III 1" evidence="3">
    <location>
        <begin position="37"/>
        <end position="136"/>
    </location>
</feature>
<feature type="domain" description="Fibronectin type-III 2" evidence="3">
    <location>
        <begin position="144"/>
        <end position="228"/>
    </location>
</feature>
<feature type="glycosylation site" description="N-linked (GlcNAc...) asparagine" evidence="2">
    <location>
        <position position="40"/>
    </location>
</feature>
<feature type="glycosylation site" description="N-linked (GlcNAc...) asparagine" evidence="2">
    <location>
        <position position="134"/>
    </location>
</feature>
<feature type="disulfide bond" evidence="9">
    <location>
        <begin position="89"/>
        <end position="97"/>
    </location>
</feature>
<feature type="disulfide bond" evidence="9">
    <location>
        <begin position="202"/>
        <end position="223"/>
    </location>
</feature>
<feature type="splice variant" id="VSP_054905" description="In isoform 2." evidence="10">
    <location>
        <begin position="1"/>
        <end position="47"/>
    </location>
</feature>
<feature type="splice variant" id="VSP_054906" description="In isoform 2." evidence="10">
    <original>HVKMVRSGGIPVHLET</original>
    <variation>RPFPWYWPCLPLLASC</variation>
    <location>
        <begin position="179"/>
        <end position="194"/>
    </location>
</feature>
<feature type="splice variant" id="VSP_054907" description="In isoform 2." evidence="10">
    <location>
        <begin position="195"/>
        <end position="311"/>
    </location>
</feature>
<feature type="strand" evidence="13">
    <location>
        <begin position="42"/>
        <end position="46"/>
    </location>
</feature>
<feature type="strand" evidence="13">
    <location>
        <begin position="49"/>
        <end position="53"/>
    </location>
</feature>
<feature type="strand" evidence="12">
    <location>
        <begin position="60"/>
        <end position="62"/>
    </location>
</feature>
<feature type="strand" evidence="13">
    <location>
        <begin position="65"/>
        <end position="71"/>
    </location>
</feature>
<feature type="helix" evidence="13">
    <location>
        <begin position="73"/>
        <end position="78"/>
    </location>
</feature>
<feature type="strand" evidence="13">
    <location>
        <begin position="90"/>
        <end position="92"/>
    </location>
</feature>
<feature type="strand" evidence="13">
    <location>
        <begin position="94"/>
        <end position="98"/>
    </location>
</feature>
<feature type="helix" evidence="13">
    <location>
        <begin position="100"/>
        <end position="102"/>
    </location>
</feature>
<feature type="strand" evidence="13">
    <location>
        <begin position="105"/>
        <end position="117"/>
    </location>
</feature>
<feature type="helix" evidence="13">
    <location>
        <begin position="133"/>
        <end position="135"/>
    </location>
</feature>
<feature type="strand" evidence="13">
    <location>
        <begin position="143"/>
        <end position="148"/>
    </location>
</feature>
<feature type="strand" evidence="13">
    <location>
        <begin position="151"/>
        <end position="156"/>
    </location>
</feature>
<feature type="strand" evidence="13">
    <location>
        <begin position="164"/>
        <end position="175"/>
    </location>
</feature>
<feature type="strand" evidence="13">
    <location>
        <begin position="179"/>
        <end position="183"/>
    </location>
</feature>
<feature type="strand" evidence="13">
    <location>
        <begin position="190"/>
        <end position="194"/>
    </location>
</feature>
<feature type="strand" evidence="13">
    <location>
        <begin position="197"/>
        <end position="199"/>
    </location>
</feature>
<feature type="strand" evidence="13">
    <location>
        <begin position="201"/>
        <end position="208"/>
    </location>
</feature>
<feature type="turn" evidence="13">
    <location>
        <begin position="210"/>
        <end position="212"/>
    </location>
</feature>
<feature type="strand" evidence="12">
    <location>
        <begin position="222"/>
        <end position="224"/>
    </location>
</feature>
<organism>
    <name type="scientific">Homo sapiens</name>
    <name type="common">Human</name>
    <dbReference type="NCBI Taxonomy" id="9606"/>
    <lineage>
        <taxon>Eukaryota</taxon>
        <taxon>Metazoa</taxon>
        <taxon>Chordata</taxon>
        <taxon>Craniata</taxon>
        <taxon>Vertebrata</taxon>
        <taxon>Euteleostomi</taxon>
        <taxon>Mammalia</taxon>
        <taxon>Eutheria</taxon>
        <taxon>Euarchontoglires</taxon>
        <taxon>Primates</taxon>
        <taxon>Haplorrhini</taxon>
        <taxon>Catarrhini</taxon>
        <taxon>Hominidae</taxon>
        <taxon>Homo</taxon>
    </lineage>
</organism>